<name>DAPF_PSEPF</name>
<protein>
    <recommendedName>
        <fullName evidence="1">Diaminopimelate epimerase</fullName>
        <shortName evidence="1">DAP epimerase</shortName>
        <ecNumber evidence="1">5.1.1.7</ecNumber>
    </recommendedName>
    <alternativeName>
        <fullName evidence="1">PLP-independent amino acid racemase</fullName>
    </alternativeName>
</protein>
<proteinExistence type="inferred from homology"/>
<gene>
    <name evidence="1" type="primary">dapF</name>
    <name type="ordered locus">Pfl01_5499</name>
</gene>
<dbReference type="EC" id="5.1.1.7" evidence="1"/>
<dbReference type="EMBL" id="CP000094">
    <property type="protein sequence ID" value="ABA77236.1"/>
    <property type="molecule type" value="Genomic_DNA"/>
</dbReference>
<dbReference type="RefSeq" id="WP_011336523.1">
    <property type="nucleotide sequence ID" value="NC_007492.2"/>
</dbReference>
<dbReference type="SMR" id="Q3K4R8"/>
<dbReference type="KEGG" id="pfo:Pfl01_5499"/>
<dbReference type="eggNOG" id="COG0253">
    <property type="taxonomic scope" value="Bacteria"/>
</dbReference>
<dbReference type="HOGENOM" id="CLU_053306_1_1_6"/>
<dbReference type="UniPathway" id="UPA00034">
    <property type="reaction ID" value="UER00025"/>
</dbReference>
<dbReference type="Proteomes" id="UP000002704">
    <property type="component" value="Chromosome"/>
</dbReference>
<dbReference type="GO" id="GO:0005829">
    <property type="term" value="C:cytosol"/>
    <property type="evidence" value="ECO:0007669"/>
    <property type="project" value="TreeGrafter"/>
</dbReference>
<dbReference type="GO" id="GO:0008837">
    <property type="term" value="F:diaminopimelate epimerase activity"/>
    <property type="evidence" value="ECO:0007669"/>
    <property type="project" value="UniProtKB-UniRule"/>
</dbReference>
<dbReference type="GO" id="GO:0009089">
    <property type="term" value="P:lysine biosynthetic process via diaminopimelate"/>
    <property type="evidence" value="ECO:0007669"/>
    <property type="project" value="UniProtKB-UniRule"/>
</dbReference>
<dbReference type="FunFam" id="3.10.310.10:FF:000001">
    <property type="entry name" value="Diaminopimelate epimerase"/>
    <property type="match status" value="1"/>
</dbReference>
<dbReference type="Gene3D" id="3.10.310.10">
    <property type="entry name" value="Diaminopimelate Epimerase, Chain A, domain 1"/>
    <property type="match status" value="2"/>
</dbReference>
<dbReference type="HAMAP" id="MF_00197">
    <property type="entry name" value="DAP_epimerase"/>
    <property type="match status" value="1"/>
</dbReference>
<dbReference type="InterPro" id="IPR018510">
    <property type="entry name" value="DAP_epimerase_AS"/>
</dbReference>
<dbReference type="InterPro" id="IPR001653">
    <property type="entry name" value="DAP_epimerase_DapF"/>
</dbReference>
<dbReference type="NCBIfam" id="TIGR00652">
    <property type="entry name" value="DapF"/>
    <property type="match status" value="1"/>
</dbReference>
<dbReference type="PANTHER" id="PTHR31689:SF0">
    <property type="entry name" value="DIAMINOPIMELATE EPIMERASE"/>
    <property type="match status" value="1"/>
</dbReference>
<dbReference type="PANTHER" id="PTHR31689">
    <property type="entry name" value="DIAMINOPIMELATE EPIMERASE, CHLOROPLASTIC"/>
    <property type="match status" value="1"/>
</dbReference>
<dbReference type="Pfam" id="PF01678">
    <property type="entry name" value="DAP_epimerase"/>
    <property type="match status" value="2"/>
</dbReference>
<dbReference type="SUPFAM" id="SSF54506">
    <property type="entry name" value="Diaminopimelate epimerase-like"/>
    <property type="match status" value="1"/>
</dbReference>
<dbReference type="PROSITE" id="PS01326">
    <property type="entry name" value="DAP_EPIMERASE"/>
    <property type="match status" value="1"/>
</dbReference>
<organism>
    <name type="scientific">Pseudomonas fluorescens (strain Pf0-1)</name>
    <dbReference type="NCBI Taxonomy" id="205922"/>
    <lineage>
        <taxon>Bacteria</taxon>
        <taxon>Pseudomonadati</taxon>
        <taxon>Pseudomonadota</taxon>
        <taxon>Gammaproteobacteria</taxon>
        <taxon>Pseudomonadales</taxon>
        <taxon>Pseudomonadaceae</taxon>
        <taxon>Pseudomonas</taxon>
    </lineage>
</organism>
<comment type="function">
    <text evidence="1">Catalyzes the stereoinversion of LL-2,6-diaminopimelate (L,L-DAP) to meso-diaminopimelate (meso-DAP), a precursor of L-lysine and an essential component of the bacterial peptidoglycan.</text>
</comment>
<comment type="catalytic activity">
    <reaction evidence="1">
        <text>(2S,6S)-2,6-diaminopimelate = meso-2,6-diaminopimelate</text>
        <dbReference type="Rhea" id="RHEA:15393"/>
        <dbReference type="ChEBI" id="CHEBI:57609"/>
        <dbReference type="ChEBI" id="CHEBI:57791"/>
        <dbReference type="EC" id="5.1.1.7"/>
    </reaction>
</comment>
<comment type="pathway">
    <text evidence="1">Amino-acid biosynthesis; L-lysine biosynthesis via DAP pathway; DL-2,6-diaminopimelate from LL-2,6-diaminopimelate: step 1/1.</text>
</comment>
<comment type="subunit">
    <text evidence="1">Homodimer.</text>
</comment>
<comment type="subcellular location">
    <subcellularLocation>
        <location evidence="1">Cytoplasm</location>
    </subcellularLocation>
</comment>
<comment type="similarity">
    <text evidence="1">Belongs to the diaminopimelate epimerase family.</text>
</comment>
<accession>Q3K4R8</accession>
<evidence type="ECO:0000255" key="1">
    <source>
        <dbReference type="HAMAP-Rule" id="MF_00197"/>
    </source>
</evidence>
<reference key="1">
    <citation type="journal article" date="2009" name="Genome Biol.">
        <title>Genomic and genetic analyses of diversity and plant interactions of Pseudomonas fluorescens.</title>
        <authorList>
            <person name="Silby M.W."/>
            <person name="Cerdeno-Tarraga A.M."/>
            <person name="Vernikos G.S."/>
            <person name="Giddens S.R."/>
            <person name="Jackson R.W."/>
            <person name="Preston G.M."/>
            <person name="Zhang X.-X."/>
            <person name="Moon C.D."/>
            <person name="Gehrig S.M."/>
            <person name="Godfrey S.A.C."/>
            <person name="Knight C.G."/>
            <person name="Malone J.G."/>
            <person name="Robinson Z."/>
            <person name="Spiers A.J."/>
            <person name="Harris S."/>
            <person name="Challis G.L."/>
            <person name="Yaxley A.M."/>
            <person name="Harris D."/>
            <person name="Seeger K."/>
            <person name="Murphy L."/>
            <person name="Rutter S."/>
            <person name="Squares R."/>
            <person name="Quail M.A."/>
            <person name="Saunders E."/>
            <person name="Mavromatis K."/>
            <person name="Brettin T.S."/>
            <person name="Bentley S.D."/>
            <person name="Hothersall J."/>
            <person name="Stephens E."/>
            <person name="Thomas C.M."/>
            <person name="Parkhill J."/>
            <person name="Levy S.B."/>
            <person name="Rainey P.B."/>
            <person name="Thomson N.R."/>
        </authorList>
    </citation>
    <scope>NUCLEOTIDE SEQUENCE [LARGE SCALE GENOMIC DNA]</scope>
    <source>
        <strain>Pf0-1</strain>
    </source>
</reference>
<sequence length="276" mass="30157">MLLRFTKMHGLGNDFMVLDLVSQHAHIQPKHAKMWGDRHTGIGFDQLLIVEAPSNPDVDFRYRIFNSDGSEVEQCGNGARCFARFVLDKRLTAKRQIRVETKGGIIELDVRNDGQIGVNMGAPRLVPADIPFQAPEQALSYQVDVDGTPVDLAAVSMGNPHAVLRVSDINTAPVHELGPKIEHHPRFPARVNVGFLQVIDRHRAQLRVWERGAGETQACGTGACAAAVAAISQGWMDSPLLIDLPGGRLSIEWAGPGQPVLMTGPAVRVYEGQVRL</sequence>
<keyword id="KW-0028">Amino-acid biosynthesis</keyword>
<keyword id="KW-0963">Cytoplasm</keyword>
<keyword id="KW-0413">Isomerase</keyword>
<keyword id="KW-0457">Lysine biosynthesis</keyword>
<feature type="chain" id="PRO_1000011935" description="Diaminopimelate epimerase">
    <location>
        <begin position="1"/>
        <end position="276"/>
    </location>
</feature>
<feature type="active site" description="Proton donor" evidence="1">
    <location>
        <position position="75"/>
    </location>
</feature>
<feature type="active site" description="Proton acceptor" evidence="1">
    <location>
        <position position="219"/>
    </location>
</feature>
<feature type="binding site" evidence="1">
    <location>
        <position position="13"/>
    </location>
    <ligand>
        <name>substrate</name>
    </ligand>
</feature>
<feature type="binding site" evidence="1">
    <location>
        <position position="46"/>
    </location>
    <ligand>
        <name>substrate</name>
    </ligand>
</feature>
<feature type="binding site" evidence="1">
    <location>
        <position position="66"/>
    </location>
    <ligand>
        <name>substrate</name>
    </ligand>
</feature>
<feature type="binding site" evidence="1">
    <location>
        <begin position="76"/>
        <end position="77"/>
    </location>
    <ligand>
        <name>substrate</name>
    </ligand>
</feature>
<feature type="binding site" evidence="1">
    <location>
        <position position="159"/>
    </location>
    <ligand>
        <name>substrate</name>
    </ligand>
</feature>
<feature type="binding site" evidence="1">
    <location>
        <position position="192"/>
    </location>
    <ligand>
        <name>substrate</name>
    </ligand>
</feature>
<feature type="binding site" evidence="1">
    <location>
        <begin position="210"/>
        <end position="211"/>
    </location>
    <ligand>
        <name>substrate</name>
    </ligand>
</feature>
<feature type="binding site" evidence="1">
    <location>
        <begin position="220"/>
        <end position="221"/>
    </location>
    <ligand>
        <name>substrate</name>
    </ligand>
</feature>
<feature type="site" description="Could be important to modulate the pK values of the two catalytic cysteine residues" evidence="1">
    <location>
        <position position="161"/>
    </location>
</feature>
<feature type="site" description="Could be important to modulate the pK values of the two catalytic cysteine residues" evidence="1">
    <location>
        <position position="210"/>
    </location>
</feature>
<feature type="site" description="Important for dimerization" evidence="1">
    <location>
        <position position="270"/>
    </location>
</feature>